<comment type="function">
    <text evidence="1">NDH-1 shuttles electrons from NADH, via FMN and iron-sulfur (Fe-S) centers, to quinones in the respiratory chain. The immediate electron acceptor for the enzyme in this species is believed to be ubiquinone. Couples the redox reaction to proton translocation (for every two electrons transferred, four hydrogen ions are translocated across the cytoplasmic membrane), and thus conserves the redox energy in a proton gradient.</text>
</comment>
<comment type="catalytic activity">
    <reaction evidence="1">
        <text>a quinone + NADH + 5 H(+)(in) = a quinol + NAD(+) + 4 H(+)(out)</text>
        <dbReference type="Rhea" id="RHEA:57888"/>
        <dbReference type="ChEBI" id="CHEBI:15378"/>
        <dbReference type="ChEBI" id="CHEBI:24646"/>
        <dbReference type="ChEBI" id="CHEBI:57540"/>
        <dbReference type="ChEBI" id="CHEBI:57945"/>
        <dbReference type="ChEBI" id="CHEBI:132124"/>
    </reaction>
</comment>
<comment type="cofactor">
    <cofactor evidence="1">
        <name>[4Fe-4S] cluster</name>
        <dbReference type="ChEBI" id="CHEBI:49883"/>
    </cofactor>
    <text evidence="1">Binds 1 [4Fe-4S] cluster.</text>
</comment>
<comment type="subunit">
    <text evidence="1">NDH-1 is composed of 14 different subunits. Subunits NuoB, C, D, E, F, and G constitute the peripheral sector of the complex.</text>
</comment>
<comment type="subcellular location">
    <subcellularLocation>
        <location evidence="1">Cell inner membrane</location>
        <topology evidence="1">Peripheral membrane protein</topology>
        <orientation evidence="1">Cytoplasmic side</orientation>
    </subcellularLocation>
</comment>
<comment type="similarity">
    <text evidence="1">Belongs to the complex I 20 kDa subunit family.</text>
</comment>
<name>NUOB2_OPITP</name>
<protein>
    <recommendedName>
        <fullName evidence="1">NADH-quinone oxidoreductase subunit B 2</fullName>
        <ecNumber evidence="1">7.1.1.-</ecNumber>
    </recommendedName>
    <alternativeName>
        <fullName evidence="1">NADH dehydrogenase I subunit B 2</fullName>
    </alternativeName>
    <alternativeName>
        <fullName evidence="1">NDH-1 subunit B 2</fullName>
    </alternativeName>
</protein>
<organism>
    <name type="scientific">Opitutus terrae (strain DSM 11246 / JCM 15787 / PB90-1)</name>
    <dbReference type="NCBI Taxonomy" id="452637"/>
    <lineage>
        <taxon>Bacteria</taxon>
        <taxon>Pseudomonadati</taxon>
        <taxon>Verrucomicrobiota</taxon>
        <taxon>Opitutia</taxon>
        <taxon>Opitutales</taxon>
        <taxon>Opitutaceae</taxon>
        <taxon>Opitutus</taxon>
    </lineage>
</organism>
<accession>B1ZUJ0</accession>
<proteinExistence type="inferred from homology"/>
<feature type="chain" id="PRO_0000376297" description="NADH-quinone oxidoreductase subunit B 2">
    <location>
        <begin position="1"/>
        <end position="191"/>
    </location>
</feature>
<feature type="region of interest" description="Disordered" evidence="2">
    <location>
        <begin position="1"/>
        <end position="25"/>
    </location>
</feature>
<feature type="binding site" evidence="1">
    <location>
        <position position="62"/>
    </location>
    <ligand>
        <name>[4Fe-4S] cluster</name>
        <dbReference type="ChEBI" id="CHEBI:49883"/>
    </ligand>
</feature>
<feature type="binding site" evidence="1">
    <location>
        <position position="63"/>
    </location>
    <ligand>
        <name>[4Fe-4S] cluster</name>
        <dbReference type="ChEBI" id="CHEBI:49883"/>
    </ligand>
</feature>
<feature type="binding site" evidence="1">
    <location>
        <position position="128"/>
    </location>
    <ligand>
        <name>[4Fe-4S] cluster</name>
        <dbReference type="ChEBI" id="CHEBI:49883"/>
    </ligand>
</feature>
<feature type="binding site" evidence="1">
    <location>
        <position position="160"/>
    </location>
    <ligand>
        <name>[4Fe-4S] cluster</name>
        <dbReference type="ChEBI" id="CHEBI:49883"/>
    </ligand>
</feature>
<sequence length="191" mass="20612">MESPLTPSAQPAPMPSLVAATGPSTPEIPPEVSQIARFAKLDDLLALGRANSLWPLTFGLACCAIEMMAAGMARFDISRFGAEVFRPSPRQADVMIVAGTVNKKMAPAVKLLYDQMLEPKWVIAMGQCAISGGPFKYPGQYAVVEGVDQLFPVDVYVPGCPPRPEALIEGILKLEEKITGKRRFPVAQLKE</sequence>
<keyword id="KW-0004">4Fe-4S</keyword>
<keyword id="KW-0997">Cell inner membrane</keyword>
<keyword id="KW-1003">Cell membrane</keyword>
<keyword id="KW-0408">Iron</keyword>
<keyword id="KW-0411">Iron-sulfur</keyword>
<keyword id="KW-0472">Membrane</keyword>
<keyword id="KW-0479">Metal-binding</keyword>
<keyword id="KW-0520">NAD</keyword>
<keyword id="KW-0874">Quinone</keyword>
<keyword id="KW-1185">Reference proteome</keyword>
<keyword id="KW-1278">Translocase</keyword>
<keyword id="KW-0813">Transport</keyword>
<keyword id="KW-0830">Ubiquinone</keyword>
<reference key="1">
    <citation type="journal article" date="2011" name="J. Bacteriol.">
        <title>Genome sequence of the verrucomicrobium Opitutus terrae PB90-1, an abundant inhabitant of rice paddy soil ecosystems.</title>
        <authorList>
            <person name="van Passel M.W."/>
            <person name="Kant R."/>
            <person name="Palva A."/>
            <person name="Copeland A."/>
            <person name="Lucas S."/>
            <person name="Lapidus A."/>
            <person name="Glavina del Rio T."/>
            <person name="Pitluck S."/>
            <person name="Goltsman E."/>
            <person name="Clum A."/>
            <person name="Sun H."/>
            <person name="Schmutz J."/>
            <person name="Larimer F.W."/>
            <person name="Land M.L."/>
            <person name="Hauser L."/>
            <person name="Kyrpides N."/>
            <person name="Mikhailova N."/>
            <person name="Richardson P.P."/>
            <person name="Janssen P.H."/>
            <person name="de Vos W.M."/>
            <person name="Smidt H."/>
        </authorList>
    </citation>
    <scope>NUCLEOTIDE SEQUENCE [LARGE SCALE GENOMIC DNA]</scope>
    <source>
        <strain>DSM 11246 / JCM 15787 / PB90-1</strain>
    </source>
</reference>
<evidence type="ECO:0000255" key="1">
    <source>
        <dbReference type="HAMAP-Rule" id="MF_01356"/>
    </source>
</evidence>
<evidence type="ECO:0000256" key="2">
    <source>
        <dbReference type="SAM" id="MobiDB-lite"/>
    </source>
</evidence>
<dbReference type="EC" id="7.1.1.-" evidence="1"/>
<dbReference type="EMBL" id="CP001032">
    <property type="protein sequence ID" value="ACB74033.1"/>
    <property type="molecule type" value="Genomic_DNA"/>
</dbReference>
<dbReference type="SMR" id="B1ZUJ0"/>
<dbReference type="STRING" id="452637.Oter_0744"/>
<dbReference type="KEGG" id="ote:Oter_0744"/>
<dbReference type="eggNOG" id="COG0377">
    <property type="taxonomic scope" value="Bacteria"/>
</dbReference>
<dbReference type="HOGENOM" id="CLU_055737_7_3_0"/>
<dbReference type="OrthoDB" id="9786737at2"/>
<dbReference type="Proteomes" id="UP000007013">
    <property type="component" value="Chromosome"/>
</dbReference>
<dbReference type="GO" id="GO:0005886">
    <property type="term" value="C:plasma membrane"/>
    <property type="evidence" value="ECO:0007669"/>
    <property type="project" value="UniProtKB-SubCell"/>
</dbReference>
<dbReference type="GO" id="GO:0045271">
    <property type="term" value="C:respiratory chain complex I"/>
    <property type="evidence" value="ECO:0007669"/>
    <property type="project" value="TreeGrafter"/>
</dbReference>
<dbReference type="GO" id="GO:0051539">
    <property type="term" value="F:4 iron, 4 sulfur cluster binding"/>
    <property type="evidence" value="ECO:0007669"/>
    <property type="project" value="UniProtKB-KW"/>
</dbReference>
<dbReference type="GO" id="GO:0005506">
    <property type="term" value="F:iron ion binding"/>
    <property type="evidence" value="ECO:0007669"/>
    <property type="project" value="UniProtKB-UniRule"/>
</dbReference>
<dbReference type="GO" id="GO:0008137">
    <property type="term" value="F:NADH dehydrogenase (ubiquinone) activity"/>
    <property type="evidence" value="ECO:0007669"/>
    <property type="project" value="InterPro"/>
</dbReference>
<dbReference type="GO" id="GO:0050136">
    <property type="term" value="F:NADH:ubiquinone reductase (non-electrogenic) activity"/>
    <property type="evidence" value="ECO:0007669"/>
    <property type="project" value="UniProtKB-UniRule"/>
</dbReference>
<dbReference type="GO" id="GO:0048038">
    <property type="term" value="F:quinone binding"/>
    <property type="evidence" value="ECO:0007669"/>
    <property type="project" value="UniProtKB-KW"/>
</dbReference>
<dbReference type="GO" id="GO:0009060">
    <property type="term" value="P:aerobic respiration"/>
    <property type="evidence" value="ECO:0007669"/>
    <property type="project" value="TreeGrafter"/>
</dbReference>
<dbReference type="GO" id="GO:0015990">
    <property type="term" value="P:electron transport coupled proton transport"/>
    <property type="evidence" value="ECO:0007669"/>
    <property type="project" value="TreeGrafter"/>
</dbReference>
<dbReference type="FunFam" id="3.40.50.12280:FF:000002">
    <property type="entry name" value="NADH-quinone oxidoreductase subunit B"/>
    <property type="match status" value="1"/>
</dbReference>
<dbReference type="Gene3D" id="3.40.50.12280">
    <property type="match status" value="1"/>
</dbReference>
<dbReference type="HAMAP" id="MF_01356">
    <property type="entry name" value="NDH1_NuoB"/>
    <property type="match status" value="1"/>
</dbReference>
<dbReference type="InterPro" id="IPR006137">
    <property type="entry name" value="NADH_UbQ_OxRdtase-like_20kDa"/>
</dbReference>
<dbReference type="InterPro" id="IPR006138">
    <property type="entry name" value="NADH_UQ_OxRdtase_20Kd_su"/>
</dbReference>
<dbReference type="NCBIfam" id="TIGR01957">
    <property type="entry name" value="nuoB_fam"/>
    <property type="match status" value="1"/>
</dbReference>
<dbReference type="NCBIfam" id="NF005012">
    <property type="entry name" value="PRK06411.1"/>
    <property type="match status" value="1"/>
</dbReference>
<dbReference type="PANTHER" id="PTHR11995">
    <property type="entry name" value="NADH DEHYDROGENASE"/>
    <property type="match status" value="1"/>
</dbReference>
<dbReference type="PANTHER" id="PTHR11995:SF14">
    <property type="entry name" value="NADH DEHYDROGENASE [UBIQUINONE] IRON-SULFUR PROTEIN 7, MITOCHONDRIAL"/>
    <property type="match status" value="1"/>
</dbReference>
<dbReference type="Pfam" id="PF01058">
    <property type="entry name" value="Oxidored_q6"/>
    <property type="match status" value="1"/>
</dbReference>
<dbReference type="SUPFAM" id="SSF56770">
    <property type="entry name" value="HydA/Nqo6-like"/>
    <property type="match status" value="1"/>
</dbReference>
<gene>
    <name evidence="1" type="primary">nuoB2</name>
    <name type="ordered locus">Oter_0744</name>
</gene>